<gene>
    <name evidence="1" type="primary">ppnP</name>
    <name type="ordered locus">SBO_0286</name>
</gene>
<feature type="chain" id="PRO_0000298729" description="Pyrimidine/purine nucleoside phosphorylase">
    <location>
        <begin position="1"/>
        <end position="94"/>
    </location>
</feature>
<comment type="function">
    <text evidence="1">Catalyzes the phosphorolysis of diverse nucleosides, yielding D-ribose 1-phosphate and the respective free bases. Can use uridine, adenosine, guanosine, cytidine, thymidine, inosine and xanthosine as substrates. Also catalyzes the reverse reactions.</text>
</comment>
<comment type="catalytic activity">
    <reaction evidence="1">
        <text>a purine D-ribonucleoside + phosphate = a purine nucleobase + alpha-D-ribose 1-phosphate</text>
        <dbReference type="Rhea" id="RHEA:19805"/>
        <dbReference type="ChEBI" id="CHEBI:26386"/>
        <dbReference type="ChEBI" id="CHEBI:43474"/>
        <dbReference type="ChEBI" id="CHEBI:57720"/>
        <dbReference type="ChEBI" id="CHEBI:142355"/>
        <dbReference type="EC" id="2.4.2.1"/>
    </reaction>
</comment>
<comment type="catalytic activity">
    <reaction evidence="1">
        <text>adenosine + phosphate = alpha-D-ribose 1-phosphate + adenine</text>
        <dbReference type="Rhea" id="RHEA:27642"/>
        <dbReference type="ChEBI" id="CHEBI:16335"/>
        <dbReference type="ChEBI" id="CHEBI:16708"/>
        <dbReference type="ChEBI" id="CHEBI:43474"/>
        <dbReference type="ChEBI" id="CHEBI:57720"/>
        <dbReference type="EC" id="2.4.2.1"/>
    </reaction>
</comment>
<comment type="catalytic activity">
    <reaction evidence="1">
        <text>cytidine + phosphate = cytosine + alpha-D-ribose 1-phosphate</text>
        <dbReference type="Rhea" id="RHEA:52540"/>
        <dbReference type="ChEBI" id="CHEBI:16040"/>
        <dbReference type="ChEBI" id="CHEBI:17562"/>
        <dbReference type="ChEBI" id="CHEBI:43474"/>
        <dbReference type="ChEBI" id="CHEBI:57720"/>
        <dbReference type="EC" id="2.4.2.2"/>
    </reaction>
</comment>
<comment type="catalytic activity">
    <reaction evidence="1">
        <text>guanosine + phosphate = alpha-D-ribose 1-phosphate + guanine</text>
        <dbReference type="Rhea" id="RHEA:13233"/>
        <dbReference type="ChEBI" id="CHEBI:16235"/>
        <dbReference type="ChEBI" id="CHEBI:16750"/>
        <dbReference type="ChEBI" id="CHEBI:43474"/>
        <dbReference type="ChEBI" id="CHEBI:57720"/>
        <dbReference type="EC" id="2.4.2.1"/>
    </reaction>
</comment>
<comment type="catalytic activity">
    <reaction evidence="1">
        <text>inosine + phosphate = alpha-D-ribose 1-phosphate + hypoxanthine</text>
        <dbReference type="Rhea" id="RHEA:27646"/>
        <dbReference type="ChEBI" id="CHEBI:17368"/>
        <dbReference type="ChEBI" id="CHEBI:17596"/>
        <dbReference type="ChEBI" id="CHEBI:43474"/>
        <dbReference type="ChEBI" id="CHEBI:57720"/>
        <dbReference type="EC" id="2.4.2.1"/>
    </reaction>
</comment>
<comment type="catalytic activity">
    <reaction evidence="1">
        <text>thymidine + phosphate = 2-deoxy-alpha-D-ribose 1-phosphate + thymine</text>
        <dbReference type="Rhea" id="RHEA:16037"/>
        <dbReference type="ChEBI" id="CHEBI:17748"/>
        <dbReference type="ChEBI" id="CHEBI:17821"/>
        <dbReference type="ChEBI" id="CHEBI:43474"/>
        <dbReference type="ChEBI" id="CHEBI:57259"/>
        <dbReference type="EC" id="2.4.2.2"/>
    </reaction>
</comment>
<comment type="catalytic activity">
    <reaction evidence="1">
        <text>uridine + phosphate = alpha-D-ribose 1-phosphate + uracil</text>
        <dbReference type="Rhea" id="RHEA:24388"/>
        <dbReference type="ChEBI" id="CHEBI:16704"/>
        <dbReference type="ChEBI" id="CHEBI:17568"/>
        <dbReference type="ChEBI" id="CHEBI:43474"/>
        <dbReference type="ChEBI" id="CHEBI:57720"/>
        <dbReference type="EC" id="2.4.2.2"/>
    </reaction>
</comment>
<comment type="catalytic activity">
    <reaction evidence="1">
        <text>xanthosine + phosphate = alpha-D-ribose 1-phosphate + xanthine</text>
        <dbReference type="Rhea" id="RHEA:27638"/>
        <dbReference type="ChEBI" id="CHEBI:17712"/>
        <dbReference type="ChEBI" id="CHEBI:18107"/>
        <dbReference type="ChEBI" id="CHEBI:43474"/>
        <dbReference type="ChEBI" id="CHEBI:57720"/>
        <dbReference type="EC" id="2.4.2.1"/>
    </reaction>
</comment>
<comment type="similarity">
    <text evidence="1">Belongs to the nucleoside phosphorylase PpnP family.</text>
</comment>
<name>PPNP_SHIBS</name>
<sequence length="94" mass="10234">MLQSNEYFSGKVKSIGFSSSSTGRASVGVMVEGEYTFSTAEPEEMTVISGALNVLLPDATDWQVYEAGSVFNVPGHSEFHLQVAEPTSYLCRYL</sequence>
<protein>
    <recommendedName>
        <fullName evidence="1">Pyrimidine/purine nucleoside phosphorylase</fullName>
        <ecNumber evidence="1">2.4.2.1</ecNumber>
        <ecNumber evidence="1">2.4.2.2</ecNumber>
    </recommendedName>
    <alternativeName>
        <fullName evidence="1">Adenosine phosphorylase</fullName>
    </alternativeName>
    <alternativeName>
        <fullName evidence="1">Cytidine phosphorylase</fullName>
    </alternativeName>
    <alternativeName>
        <fullName evidence="1">Guanosine phosphorylase</fullName>
    </alternativeName>
    <alternativeName>
        <fullName evidence="1">Inosine phosphorylase</fullName>
    </alternativeName>
    <alternativeName>
        <fullName evidence="1">Thymidine phosphorylase</fullName>
    </alternativeName>
    <alternativeName>
        <fullName evidence="1">Uridine phosphorylase</fullName>
    </alternativeName>
    <alternativeName>
        <fullName evidence="1">Xanthosine phosphorylase</fullName>
    </alternativeName>
</protein>
<evidence type="ECO:0000255" key="1">
    <source>
        <dbReference type="HAMAP-Rule" id="MF_01537"/>
    </source>
</evidence>
<keyword id="KW-0328">Glycosyltransferase</keyword>
<keyword id="KW-0808">Transferase</keyword>
<organism>
    <name type="scientific">Shigella boydii serotype 4 (strain Sb227)</name>
    <dbReference type="NCBI Taxonomy" id="300268"/>
    <lineage>
        <taxon>Bacteria</taxon>
        <taxon>Pseudomonadati</taxon>
        <taxon>Pseudomonadota</taxon>
        <taxon>Gammaproteobacteria</taxon>
        <taxon>Enterobacterales</taxon>
        <taxon>Enterobacteriaceae</taxon>
        <taxon>Shigella</taxon>
    </lineage>
</organism>
<dbReference type="EC" id="2.4.2.1" evidence="1"/>
<dbReference type="EC" id="2.4.2.2" evidence="1"/>
<dbReference type="EMBL" id="CP000036">
    <property type="protein sequence ID" value="ABB65001.1"/>
    <property type="molecule type" value="Genomic_DNA"/>
</dbReference>
<dbReference type="RefSeq" id="WP_000941942.1">
    <property type="nucleotide sequence ID" value="NC_007613.1"/>
</dbReference>
<dbReference type="SMR" id="Q325K7"/>
<dbReference type="GeneID" id="93777070"/>
<dbReference type="KEGG" id="sbo:SBO_0286"/>
<dbReference type="HOGENOM" id="CLU_157874_0_0_6"/>
<dbReference type="Proteomes" id="UP000007067">
    <property type="component" value="Chromosome"/>
</dbReference>
<dbReference type="GO" id="GO:0005829">
    <property type="term" value="C:cytosol"/>
    <property type="evidence" value="ECO:0007669"/>
    <property type="project" value="TreeGrafter"/>
</dbReference>
<dbReference type="GO" id="GO:0047975">
    <property type="term" value="F:guanosine phosphorylase activity"/>
    <property type="evidence" value="ECO:0007669"/>
    <property type="project" value="UniProtKB-EC"/>
</dbReference>
<dbReference type="GO" id="GO:0004731">
    <property type="term" value="F:purine-nucleoside phosphorylase activity"/>
    <property type="evidence" value="ECO:0007669"/>
    <property type="project" value="UniProtKB-UniRule"/>
</dbReference>
<dbReference type="GO" id="GO:0009032">
    <property type="term" value="F:thymidine phosphorylase activity"/>
    <property type="evidence" value="ECO:0007669"/>
    <property type="project" value="UniProtKB-EC"/>
</dbReference>
<dbReference type="GO" id="GO:0004850">
    <property type="term" value="F:uridine phosphorylase activity"/>
    <property type="evidence" value="ECO:0007669"/>
    <property type="project" value="UniProtKB-EC"/>
</dbReference>
<dbReference type="CDD" id="cd20296">
    <property type="entry name" value="cupin_PpnP-like"/>
    <property type="match status" value="1"/>
</dbReference>
<dbReference type="FunFam" id="2.60.120.10:FF:000016">
    <property type="entry name" value="Pyrimidine/purine nucleoside phosphorylase"/>
    <property type="match status" value="1"/>
</dbReference>
<dbReference type="Gene3D" id="2.60.120.10">
    <property type="entry name" value="Jelly Rolls"/>
    <property type="match status" value="1"/>
</dbReference>
<dbReference type="HAMAP" id="MF_01537">
    <property type="entry name" value="Nucleos_phosphorylase_PpnP"/>
    <property type="match status" value="1"/>
</dbReference>
<dbReference type="InterPro" id="IPR009664">
    <property type="entry name" value="Ppnp"/>
</dbReference>
<dbReference type="InterPro" id="IPR014710">
    <property type="entry name" value="RmlC-like_jellyroll"/>
</dbReference>
<dbReference type="InterPro" id="IPR011051">
    <property type="entry name" value="RmlC_Cupin_sf"/>
</dbReference>
<dbReference type="NCBIfam" id="NF007875">
    <property type="entry name" value="PRK10579.1"/>
    <property type="match status" value="1"/>
</dbReference>
<dbReference type="PANTHER" id="PTHR36540">
    <property type="entry name" value="PYRIMIDINE/PURINE NUCLEOSIDE PHOSPHORYLASE"/>
    <property type="match status" value="1"/>
</dbReference>
<dbReference type="PANTHER" id="PTHR36540:SF1">
    <property type="entry name" value="PYRIMIDINE_PURINE NUCLEOSIDE PHOSPHORYLASE"/>
    <property type="match status" value="1"/>
</dbReference>
<dbReference type="Pfam" id="PF06865">
    <property type="entry name" value="Ppnp"/>
    <property type="match status" value="1"/>
</dbReference>
<dbReference type="SUPFAM" id="SSF51182">
    <property type="entry name" value="RmlC-like cupins"/>
    <property type="match status" value="1"/>
</dbReference>
<reference key="1">
    <citation type="journal article" date="2005" name="Nucleic Acids Res.">
        <title>Genome dynamics and diversity of Shigella species, the etiologic agents of bacillary dysentery.</title>
        <authorList>
            <person name="Yang F."/>
            <person name="Yang J."/>
            <person name="Zhang X."/>
            <person name="Chen L."/>
            <person name="Jiang Y."/>
            <person name="Yan Y."/>
            <person name="Tang X."/>
            <person name="Wang J."/>
            <person name="Xiong Z."/>
            <person name="Dong J."/>
            <person name="Xue Y."/>
            <person name="Zhu Y."/>
            <person name="Xu X."/>
            <person name="Sun L."/>
            <person name="Chen S."/>
            <person name="Nie H."/>
            <person name="Peng J."/>
            <person name="Xu J."/>
            <person name="Wang Y."/>
            <person name="Yuan Z."/>
            <person name="Wen Y."/>
            <person name="Yao Z."/>
            <person name="Shen Y."/>
            <person name="Qiang B."/>
            <person name="Hou Y."/>
            <person name="Yu J."/>
            <person name="Jin Q."/>
        </authorList>
    </citation>
    <scope>NUCLEOTIDE SEQUENCE [LARGE SCALE GENOMIC DNA]</scope>
    <source>
        <strain>Sb227</strain>
    </source>
</reference>
<accession>Q325K7</accession>
<proteinExistence type="inferred from homology"/>